<reference key="1">
    <citation type="journal article" date="2000" name="Nature">
        <title>Sequence and analysis of chromosome 1 of the plant Arabidopsis thaliana.</title>
        <authorList>
            <person name="Theologis A."/>
            <person name="Ecker J.R."/>
            <person name="Palm C.J."/>
            <person name="Federspiel N.A."/>
            <person name="Kaul S."/>
            <person name="White O."/>
            <person name="Alonso J."/>
            <person name="Altafi H."/>
            <person name="Araujo R."/>
            <person name="Bowman C.L."/>
            <person name="Brooks S.Y."/>
            <person name="Buehler E."/>
            <person name="Chan A."/>
            <person name="Chao Q."/>
            <person name="Chen H."/>
            <person name="Cheuk R.F."/>
            <person name="Chin C.W."/>
            <person name="Chung M.K."/>
            <person name="Conn L."/>
            <person name="Conway A.B."/>
            <person name="Conway A.R."/>
            <person name="Creasy T.H."/>
            <person name="Dewar K."/>
            <person name="Dunn P."/>
            <person name="Etgu P."/>
            <person name="Feldblyum T.V."/>
            <person name="Feng J.-D."/>
            <person name="Fong B."/>
            <person name="Fujii C.Y."/>
            <person name="Gill J.E."/>
            <person name="Goldsmith A.D."/>
            <person name="Haas B."/>
            <person name="Hansen N.F."/>
            <person name="Hughes B."/>
            <person name="Huizar L."/>
            <person name="Hunter J.L."/>
            <person name="Jenkins J."/>
            <person name="Johnson-Hopson C."/>
            <person name="Khan S."/>
            <person name="Khaykin E."/>
            <person name="Kim C.J."/>
            <person name="Koo H.L."/>
            <person name="Kremenetskaia I."/>
            <person name="Kurtz D.B."/>
            <person name="Kwan A."/>
            <person name="Lam B."/>
            <person name="Langin-Hooper S."/>
            <person name="Lee A."/>
            <person name="Lee J.M."/>
            <person name="Lenz C.A."/>
            <person name="Li J.H."/>
            <person name="Li Y.-P."/>
            <person name="Lin X."/>
            <person name="Liu S.X."/>
            <person name="Liu Z.A."/>
            <person name="Luros J.S."/>
            <person name="Maiti R."/>
            <person name="Marziali A."/>
            <person name="Militscher J."/>
            <person name="Miranda M."/>
            <person name="Nguyen M."/>
            <person name="Nierman W.C."/>
            <person name="Osborne B.I."/>
            <person name="Pai G."/>
            <person name="Peterson J."/>
            <person name="Pham P.K."/>
            <person name="Rizzo M."/>
            <person name="Rooney T."/>
            <person name="Rowley D."/>
            <person name="Sakano H."/>
            <person name="Salzberg S.L."/>
            <person name="Schwartz J.R."/>
            <person name="Shinn P."/>
            <person name="Southwick A.M."/>
            <person name="Sun H."/>
            <person name="Tallon L.J."/>
            <person name="Tambunga G."/>
            <person name="Toriumi M.J."/>
            <person name="Town C.D."/>
            <person name="Utterback T."/>
            <person name="Van Aken S."/>
            <person name="Vaysberg M."/>
            <person name="Vysotskaia V.S."/>
            <person name="Walker M."/>
            <person name="Wu D."/>
            <person name="Yu G."/>
            <person name="Fraser C.M."/>
            <person name="Venter J.C."/>
            <person name="Davis R.W."/>
        </authorList>
    </citation>
    <scope>NUCLEOTIDE SEQUENCE [LARGE SCALE GENOMIC DNA]</scope>
    <source>
        <strain>cv. Columbia</strain>
    </source>
</reference>
<reference key="2">
    <citation type="journal article" date="2017" name="Plant J.">
        <title>Araport11: a complete reannotation of the Arabidopsis thaliana reference genome.</title>
        <authorList>
            <person name="Cheng C.Y."/>
            <person name="Krishnakumar V."/>
            <person name="Chan A.P."/>
            <person name="Thibaud-Nissen F."/>
            <person name="Schobel S."/>
            <person name="Town C.D."/>
        </authorList>
    </citation>
    <scope>GENOME REANNOTATION</scope>
    <source>
        <strain>cv. Columbia</strain>
    </source>
</reference>
<reference key="3">
    <citation type="journal article" date="2001" name="BMC Genomics">
        <title>Kinesins in the Arabidopsis genome: a comparative analysis among eukaryotes.</title>
        <authorList>
            <person name="Reddy A.S."/>
            <person name="Day I.S."/>
        </authorList>
    </citation>
    <scope>GENE FAMILY</scope>
</reference>
<reference key="4">
    <citation type="journal article" date="2006" name="BMC Genomics">
        <title>Comprehensive comparative analysis of kinesins in photosynthetic eukaryotes.</title>
        <authorList>
            <person name="Richardson D.N."/>
            <person name="Simmons M.P."/>
            <person name="Reddy A.S."/>
        </authorList>
    </citation>
    <scope>GENE FAMILY</scope>
    <scope>NOMENCLATURE</scope>
</reference>
<reference key="5">
    <citation type="journal article" date="2012" name="Protoplasma">
        <title>Functions of the Arabidopsis kinesin superfamily of microtubule-based motor proteins.</title>
        <authorList>
            <person name="Zhu C."/>
            <person name="Dixit R."/>
        </authorList>
    </citation>
    <scope>REVIEW</scope>
</reference>
<proteinExistence type="inferred from homology"/>
<gene>
    <name evidence="5" type="primary">KIN14Q</name>
    <name evidence="6" type="ordered locus">At1g72250</name>
    <name evidence="7" type="ORF">T9N14.6</name>
</gene>
<evidence type="ECO:0000255" key="1"/>
<evidence type="ECO:0000255" key="2">
    <source>
        <dbReference type="PROSITE-ProRule" id="PRU00283"/>
    </source>
</evidence>
<evidence type="ECO:0000256" key="3">
    <source>
        <dbReference type="SAM" id="MobiDB-lite"/>
    </source>
</evidence>
<evidence type="ECO:0000303" key="4">
    <source>
    </source>
</evidence>
<evidence type="ECO:0000305" key="5"/>
<evidence type="ECO:0000312" key="6">
    <source>
        <dbReference type="Araport" id="AT1G72250"/>
    </source>
</evidence>
<evidence type="ECO:0000312" key="7">
    <source>
        <dbReference type="EMBL" id="AAG51794.1"/>
    </source>
</evidence>
<protein>
    <recommendedName>
        <fullName evidence="5">Kinesin-like protein KIN-14Q</fullName>
    </recommendedName>
</protein>
<accession>F4IBQ9</accession>
<accession>Q9C7T0</accession>
<comment type="alternative products">
    <event type="alternative splicing"/>
    <isoform>
        <id>F4IBQ9-1</id>
        <name>1</name>
        <sequence type="displayed"/>
    </isoform>
    <isoform>
        <id>F4IBQ9-2</id>
        <name>2</name>
        <sequence type="described" ref="VSP_058607"/>
    </isoform>
</comment>
<comment type="similarity">
    <text evidence="4">Belongs to the TRAFAC class myosin-kinesin ATPase superfamily. Kinesin family. KIN-14 subfamily.</text>
</comment>
<sequence length="1203" mass="134254">MEDCCDPLLATDASPRPESFSRSEKDIASRSRTVAMADLDSNCELSNDVDMEQSSPDLMKLEQSSDPVALDGKVVLGFSLASPDLVNCGASPDLPRGSYEDSPEFSKKRRFSTELSLENGIDGSTTTTRLGRKSQVVKFSAICQTFGYELSPESSFELPSPPGDFRESMTPVISINSGSISTDVTVEDVTFLKDEFFSGGESITTDAVVGNEDEILLYQTARLGNFAYKFQSLDPGDYFIDLHFAEIEFTKGPPGVISGLDLFSQVGANTPLVIEDLRMLVGREGELSIRLEGVTGAAILCGISIRKETTATYVEETGMLAVKGSTDTVLSQQTQENLVCRAEEEAEGMRSDCEQQRKEMEDMKRMVEELKLENQQKTRECEEALNSLSEIQNELMRKSMHVGSLAFAVEGQVKEKSRWFSSLRDLTRKLKIMKVEQIKLLEEATTYKHLVQDINEFSSHIQSRVKQDAELHENLKVKFVAGEKERKELYNKILELKGNIRVFCRCRPLNFEETEAGVSMGIDVESTKNGEVIVMSNGFPKKSFKFDSVFGPNASQADVFEDTAPFATSVIDGYNVCIFAYGQTGTGKTFTMEGTQHDRGVNYRTLENLFRIIKAREHRYNYEISVSVLEVYNEQIRDLLVPASQSASAPKRFEIRQLSEGNHHVPGLVEAPVKSIEEVWDVLKTGSNARAVGKTTANEHSSRSHCIHCVMVKGENLLNGECTKSKLWLVDLAGSERVAKTEVQGERLKETQNINKSLSALGDVIFALANKSSHIPFRNSKLTHLLQDSLGGDSKTLMFVQISPNENDQSETLCSLNFASRVRGIELGPAKKQLDNTELLKYKQMVEKWKQDMKGKDEQIRKMEETMYGLEAKIKERDTKNKTLQDKVKELESQLLVERKLARQHVDTKIAEQQTKQQTEDENNTSKRPPLTNILLGSASKEMVNLTRPSLLESTTSYDLAPLPSGVPKYNDLSEKENNPEMADQVHLPNKTGRFSICAKRIPSAPAPRRSSLAPTTSTSREMVYLTRPPLSESTTSYDLPPLPNGGLKYSDLIEKVNNQEMAEQVQIPKRIGAGRSSICAKRIPPAPRRKSFAPMPFIPITSTLTSPDEKSGANQVLCTSPKLHRSNGKTLTSILRRSIQKRMQMKPSPRQQPMRRGGGINVGMERVRLSIGNRGRLAHRVLLTNARKAGLKETPQKQERWI</sequence>
<keyword id="KW-0025">Alternative splicing</keyword>
<keyword id="KW-0067">ATP-binding</keyword>
<keyword id="KW-0175">Coiled coil</keyword>
<keyword id="KW-0493">Microtubule</keyword>
<keyword id="KW-0505">Motor protein</keyword>
<keyword id="KW-0547">Nucleotide-binding</keyword>
<keyword id="KW-1185">Reference proteome</keyword>
<name>KN14Q_ARATH</name>
<feature type="chain" id="PRO_0000438050" description="Kinesin-like protein KIN-14Q">
    <location>
        <begin position="1"/>
        <end position="1203"/>
    </location>
</feature>
<feature type="domain" description="Kinesin motor" evidence="2">
    <location>
        <begin position="499"/>
        <end position="825"/>
    </location>
</feature>
<feature type="region of interest" description="Disordered" evidence="3">
    <location>
        <begin position="1"/>
        <end position="28"/>
    </location>
</feature>
<feature type="region of interest" description="Disordered" evidence="3">
    <location>
        <begin position="907"/>
        <end position="931"/>
    </location>
</feature>
<feature type="coiled-coil region" evidence="1">
    <location>
        <begin position="336"/>
        <end position="395"/>
    </location>
</feature>
<feature type="coiled-coil region" evidence="1">
    <location>
        <begin position="846"/>
        <end position="901"/>
    </location>
</feature>
<feature type="compositionally biased region" description="Basic and acidic residues" evidence="3">
    <location>
        <begin position="19"/>
        <end position="28"/>
    </location>
</feature>
<feature type="binding site" evidence="2">
    <location>
        <begin position="582"/>
        <end position="589"/>
    </location>
    <ligand>
        <name>ATP</name>
        <dbReference type="ChEBI" id="CHEBI:30616"/>
    </ligand>
</feature>
<feature type="splice variant" id="VSP_058607" description="In isoform 2.">
    <original>AFAVEGQVKEKSRWFSSLRDLTRKLKIMK</original>
    <variation>GTSQREEQMVLFIKRFDKKIE</variation>
    <location>
        <begin position="406"/>
        <end position="434"/>
    </location>
</feature>
<dbReference type="EMBL" id="AC067754">
    <property type="protein sequence ID" value="AAG51794.1"/>
    <property type="molecule type" value="Genomic_DNA"/>
</dbReference>
<dbReference type="EMBL" id="CP002684">
    <property type="protein sequence ID" value="AEE35293.1"/>
    <property type="molecule type" value="Genomic_DNA"/>
</dbReference>
<dbReference type="PIR" id="B96746">
    <property type="entry name" value="B96746"/>
</dbReference>
<dbReference type="RefSeq" id="NP_177370.1">
    <molecule id="F4IBQ9-2"/>
    <property type="nucleotide sequence ID" value="NM_105884.2"/>
</dbReference>
<dbReference type="SMR" id="F4IBQ9"/>
<dbReference type="FunCoup" id="F4IBQ9">
    <property type="interactions" value="235"/>
</dbReference>
<dbReference type="STRING" id="3702.F4IBQ9"/>
<dbReference type="PaxDb" id="3702-AT1G72250.2"/>
<dbReference type="EnsemblPlants" id="AT1G72250.1">
    <molecule id="F4IBQ9-2"/>
    <property type="protein sequence ID" value="AT1G72250.1"/>
    <property type="gene ID" value="AT1G72250"/>
</dbReference>
<dbReference type="GeneID" id="843557"/>
<dbReference type="Gramene" id="AT1G72250.1">
    <molecule id="F4IBQ9-2"/>
    <property type="protein sequence ID" value="AT1G72250.1"/>
    <property type="gene ID" value="AT1G72250"/>
</dbReference>
<dbReference type="KEGG" id="ath:AT1G72250"/>
<dbReference type="Araport" id="AT1G72250"/>
<dbReference type="TAIR" id="AT1G72250">
    <property type="gene designation" value="MDKIN1"/>
</dbReference>
<dbReference type="eggNOG" id="KOG0239">
    <property type="taxonomic scope" value="Eukaryota"/>
</dbReference>
<dbReference type="HOGENOM" id="CLU_007631_0_0_1"/>
<dbReference type="InParanoid" id="F4IBQ9"/>
<dbReference type="PRO" id="PR:F4IBQ9"/>
<dbReference type="Proteomes" id="UP000006548">
    <property type="component" value="Chromosome 1"/>
</dbReference>
<dbReference type="ExpressionAtlas" id="F4IBQ9">
    <property type="expression patterns" value="baseline and differential"/>
</dbReference>
<dbReference type="GO" id="GO:0005874">
    <property type="term" value="C:microtubule"/>
    <property type="evidence" value="ECO:0007669"/>
    <property type="project" value="UniProtKB-KW"/>
</dbReference>
<dbReference type="GO" id="GO:0005524">
    <property type="term" value="F:ATP binding"/>
    <property type="evidence" value="ECO:0007669"/>
    <property type="project" value="UniProtKB-KW"/>
</dbReference>
<dbReference type="GO" id="GO:0008017">
    <property type="term" value="F:microtubule binding"/>
    <property type="evidence" value="ECO:0007669"/>
    <property type="project" value="InterPro"/>
</dbReference>
<dbReference type="GO" id="GO:0003777">
    <property type="term" value="F:microtubule motor activity"/>
    <property type="evidence" value="ECO:0007669"/>
    <property type="project" value="InterPro"/>
</dbReference>
<dbReference type="GO" id="GO:0007018">
    <property type="term" value="P:microtubule-based movement"/>
    <property type="evidence" value="ECO:0007669"/>
    <property type="project" value="InterPro"/>
</dbReference>
<dbReference type="CDD" id="cd01366">
    <property type="entry name" value="KISc_C_terminal"/>
    <property type="match status" value="1"/>
</dbReference>
<dbReference type="FunFam" id="3.40.850.10:FF:000057">
    <property type="entry name" value="kinesin-like protein KIN-14R"/>
    <property type="match status" value="1"/>
</dbReference>
<dbReference type="Gene3D" id="2.60.120.430">
    <property type="entry name" value="Galactose-binding lectin"/>
    <property type="match status" value="1"/>
</dbReference>
<dbReference type="Gene3D" id="3.40.850.10">
    <property type="entry name" value="Kinesin motor domain"/>
    <property type="match status" value="1"/>
</dbReference>
<dbReference type="InterPro" id="IPR027640">
    <property type="entry name" value="Kinesin-like_fam"/>
</dbReference>
<dbReference type="InterPro" id="IPR019821">
    <property type="entry name" value="Kinesin_motor_CS"/>
</dbReference>
<dbReference type="InterPro" id="IPR001752">
    <property type="entry name" value="Kinesin_motor_dom"/>
</dbReference>
<dbReference type="InterPro" id="IPR036961">
    <property type="entry name" value="Kinesin_motor_dom_sf"/>
</dbReference>
<dbReference type="InterPro" id="IPR021720">
    <property type="entry name" value="Malectin_dom"/>
</dbReference>
<dbReference type="InterPro" id="IPR027417">
    <property type="entry name" value="P-loop_NTPase"/>
</dbReference>
<dbReference type="PANTHER" id="PTHR47972:SF35">
    <property type="entry name" value="KINESIN-LIKE PROTEIN KIN-14Q"/>
    <property type="match status" value="1"/>
</dbReference>
<dbReference type="PANTHER" id="PTHR47972">
    <property type="entry name" value="KINESIN-LIKE PROTEIN KLP-3"/>
    <property type="match status" value="1"/>
</dbReference>
<dbReference type="Pfam" id="PF00225">
    <property type="entry name" value="Kinesin"/>
    <property type="match status" value="1"/>
</dbReference>
<dbReference type="Pfam" id="PF11721">
    <property type="entry name" value="Malectin"/>
    <property type="match status" value="1"/>
</dbReference>
<dbReference type="PRINTS" id="PR00380">
    <property type="entry name" value="KINESINHEAVY"/>
</dbReference>
<dbReference type="SMART" id="SM00129">
    <property type="entry name" value="KISc"/>
    <property type="match status" value="1"/>
</dbReference>
<dbReference type="SUPFAM" id="SSF52540">
    <property type="entry name" value="P-loop containing nucleoside triphosphate hydrolases"/>
    <property type="match status" value="1"/>
</dbReference>
<dbReference type="PROSITE" id="PS00411">
    <property type="entry name" value="KINESIN_MOTOR_1"/>
    <property type="match status" value="1"/>
</dbReference>
<dbReference type="PROSITE" id="PS50067">
    <property type="entry name" value="KINESIN_MOTOR_2"/>
    <property type="match status" value="1"/>
</dbReference>
<organism>
    <name type="scientific">Arabidopsis thaliana</name>
    <name type="common">Mouse-ear cress</name>
    <dbReference type="NCBI Taxonomy" id="3702"/>
    <lineage>
        <taxon>Eukaryota</taxon>
        <taxon>Viridiplantae</taxon>
        <taxon>Streptophyta</taxon>
        <taxon>Embryophyta</taxon>
        <taxon>Tracheophyta</taxon>
        <taxon>Spermatophyta</taxon>
        <taxon>Magnoliopsida</taxon>
        <taxon>eudicotyledons</taxon>
        <taxon>Gunneridae</taxon>
        <taxon>Pentapetalae</taxon>
        <taxon>rosids</taxon>
        <taxon>malvids</taxon>
        <taxon>Brassicales</taxon>
        <taxon>Brassicaceae</taxon>
        <taxon>Camelineae</taxon>
        <taxon>Arabidopsis</taxon>
    </lineage>
</organism>